<evidence type="ECO:0000250" key="1"/>
<evidence type="ECO:0000250" key="2">
    <source>
        <dbReference type="UniProtKB" id="P00441"/>
    </source>
</evidence>
<evidence type="ECO:0000250" key="3">
    <source>
        <dbReference type="UniProtKB" id="P00442"/>
    </source>
</evidence>
<evidence type="ECO:0000250" key="4">
    <source>
        <dbReference type="UniProtKB" id="P07632"/>
    </source>
</evidence>
<evidence type="ECO:0000250" key="5">
    <source>
        <dbReference type="UniProtKB" id="P08228"/>
    </source>
</evidence>
<evidence type="ECO:0000256" key="6">
    <source>
        <dbReference type="SAM" id="MobiDB-lite"/>
    </source>
</evidence>
<evidence type="ECO:0000305" key="7"/>
<protein>
    <recommendedName>
        <fullName evidence="2">Superoxide dismutase [Cu-Zn]</fullName>
        <ecNumber evidence="2">1.15.1.1</ecNumber>
    </recommendedName>
</protein>
<dbReference type="EC" id="1.15.1.1" evidence="2"/>
<dbReference type="EMBL" id="U93268">
    <property type="protein sequence ID" value="AAB88115.1"/>
    <property type="molecule type" value="mRNA"/>
</dbReference>
<dbReference type="EMBL" id="U93269">
    <property type="protein sequence ID" value="AAB88116.1"/>
    <property type="molecule type" value="mRNA"/>
</dbReference>
<dbReference type="SMR" id="O46412"/>
<dbReference type="GO" id="GO:0005737">
    <property type="term" value="C:cytoplasm"/>
    <property type="evidence" value="ECO:0007669"/>
    <property type="project" value="UniProtKB-SubCell"/>
</dbReference>
<dbReference type="GO" id="GO:0005634">
    <property type="term" value="C:nucleus"/>
    <property type="evidence" value="ECO:0007669"/>
    <property type="project" value="UniProtKB-SubCell"/>
</dbReference>
<dbReference type="GO" id="GO:0005507">
    <property type="term" value="F:copper ion binding"/>
    <property type="evidence" value="ECO:0007669"/>
    <property type="project" value="InterPro"/>
</dbReference>
<dbReference type="GO" id="GO:0004784">
    <property type="term" value="F:superoxide dismutase activity"/>
    <property type="evidence" value="ECO:0000250"/>
    <property type="project" value="UniProtKB"/>
</dbReference>
<dbReference type="GO" id="GO:0072593">
    <property type="term" value="P:reactive oxygen species metabolic process"/>
    <property type="evidence" value="ECO:0000250"/>
    <property type="project" value="UniProtKB"/>
</dbReference>
<dbReference type="CDD" id="cd00305">
    <property type="entry name" value="Cu-Zn_Superoxide_Dismutase"/>
    <property type="match status" value="1"/>
</dbReference>
<dbReference type="FunFam" id="2.60.40.200:FF:000001">
    <property type="entry name" value="Superoxide dismutase [Cu-Zn]"/>
    <property type="match status" value="1"/>
</dbReference>
<dbReference type="Gene3D" id="2.60.40.200">
    <property type="entry name" value="Superoxide dismutase, copper/zinc binding domain"/>
    <property type="match status" value="1"/>
</dbReference>
<dbReference type="InterPro" id="IPR036423">
    <property type="entry name" value="SOD-like_Cu/Zn_dom_sf"/>
</dbReference>
<dbReference type="InterPro" id="IPR024134">
    <property type="entry name" value="SOD_Cu/Zn_/chaperone"/>
</dbReference>
<dbReference type="InterPro" id="IPR018152">
    <property type="entry name" value="SOD_Cu/Zn_BS"/>
</dbReference>
<dbReference type="InterPro" id="IPR001424">
    <property type="entry name" value="SOD_Cu_Zn_dom"/>
</dbReference>
<dbReference type="PANTHER" id="PTHR10003">
    <property type="entry name" value="SUPEROXIDE DISMUTASE CU-ZN -RELATED"/>
    <property type="match status" value="1"/>
</dbReference>
<dbReference type="Pfam" id="PF00080">
    <property type="entry name" value="Sod_Cu"/>
    <property type="match status" value="1"/>
</dbReference>
<dbReference type="PRINTS" id="PR00068">
    <property type="entry name" value="CUZNDISMTASE"/>
</dbReference>
<dbReference type="SUPFAM" id="SSF49329">
    <property type="entry name" value="Cu,Zn superoxide dismutase-like"/>
    <property type="match status" value="1"/>
</dbReference>
<dbReference type="PROSITE" id="PS00087">
    <property type="entry name" value="SOD_CU_ZN_1"/>
    <property type="match status" value="1"/>
</dbReference>
<dbReference type="PROSITE" id="PS00332">
    <property type="entry name" value="SOD_CU_ZN_2"/>
    <property type="match status" value="1"/>
</dbReference>
<name>SODC_CEREL</name>
<comment type="function">
    <text>Destroys radicals which are normally produced within the cells and which are toxic to biological systems.</text>
</comment>
<comment type="catalytic activity">
    <reaction>
        <text>2 superoxide + 2 H(+) = H2O2 + O2</text>
        <dbReference type="Rhea" id="RHEA:20696"/>
        <dbReference type="ChEBI" id="CHEBI:15378"/>
        <dbReference type="ChEBI" id="CHEBI:15379"/>
        <dbReference type="ChEBI" id="CHEBI:16240"/>
        <dbReference type="ChEBI" id="CHEBI:18421"/>
        <dbReference type="EC" id="1.15.1.1"/>
    </reaction>
</comment>
<comment type="cofactor">
    <cofactor evidence="1">
        <name>Cu cation</name>
        <dbReference type="ChEBI" id="CHEBI:23378"/>
    </cofactor>
    <text evidence="1">Binds 1 copper ion per subunit.</text>
</comment>
<comment type="cofactor">
    <cofactor evidence="1">
        <name>Zn(2+)</name>
        <dbReference type="ChEBI" id="CHEBI:29105"/>
    </cofactor>
    <text evidence="1">Binds 1 zinc ion per subunit.</text>
</comment>
<comment type="subunit">
    <text evidence="2 5">Homodimer; non-disulfide-linked (By similarity). Heterodimer with SOD1. The heterodimer CCS:SOD1 interacts with SLC31A1; this heterotrimer is Cu(1+)-mediated and its maintenance is regulated through SOD1 activation (By similarity).</text>
</comment>
<comment type="subcellular location">
    <subcellularLocation>
        <location>Cytoplasm</location>
    </subcellularLocation>
    <subcellularLocation>
        <location evidence="1">Nucleus</location>
    </subcellularLocation>
</comment>
<comment type="PTM">
    <text evidence="1">Palmitoylation helps nuclear targeting and decreases catalytic activity.</text>
</comment>
<comment type="PTM">
    <text evidence="2">Succinylation, adjacent to copper catalytic site, probably inhibits activity. Desuccinylation by SIRT5 enhances activity.</text>
</comment>
<comment type="similarity">
    <text evidence="7">Belongs to the Cu-Zn superoxide dismutase family.</text>
</comment>
<gene>
    <name evidence="2" type="primary">SOD1</name>
</gene>
<feature type="initiator methionine" description="Removed" evidence="3">
    <location>
        <position position="1"/>
    </location>
</feature>
<feature type="chain" id="PRO_0000164055" description="Superoxide dismutase [Cu-Zn]">
    <location>
        <begin position="2"/>
        <end position="152"/>
    </location>
</feature>
<feature type="region of interest" description="Disordered" evidence="6">
    <location>
        <begin position="55"/>
        <end position="77"/>
    </location>
</feature>
<feature type="binding site" evidence="1">
    <location>
        <position position="45"/>
    </location>
    <ligand>
        <name>Cu cation</name>
        <dbReference type="ChEBI" id="CHEBI:23378"/>
        <note>catalytic</note>
    </ligand>
</feature>
<feature type="binding site" evidence="1">
    <location>
        <position position="47"/>
    </location>
    <ligand>
        <name>Cu cation</name>
        <dbReference type="ChEBI" id="CHEBI:23378"/>
        <note>catalytic</note>
    </ligand>
</feature>
<feature type="binding site" evidence="1">
    <location>
        <position position="62"/>
    </location>
    <ligand>
        <name>Cu cation</name>
        <dbReference type="ChEBI" id="CHEBI:23378"/>
        <note>catalytic</note>
    </ligand>
</feature>
<feature type="binding site" evidence="1">
    <location>
        <position position="62"/>
    </location>
    <ligand>
        <name>Zn(2+)</name>
        <dbReference type="ChEBI" id="CHEBI:29105"/>
        <note>structural</note>
    </ligand>
</feature>
<feature type="binding site" evidence="1">
    <location>
        <position position="70"/>
    </location>
    <ligand>
        <name>Zn(2+)</name>
        <dbReference type="ChEBI" id="CHEBI:29105"/>
        <note>structural</note>
    </ligand>
</feature>
<feature type="binding site" evidence="1">
    <location>
        <position position="79"/>
    </location>
    <ligand>
        <name>Zn(2+)</name>
        <dbReference type="ChEBI" id="CHEBI:29105"/>
        <note>structural</note>
    </ligand>
</feature>
<feature type="binding site" evidence="1">
    <location>
        <position position="82"/>
    </location>
    <ligand>
        <name>Zn(2+)</name>
        <dbReference type="ChEBI" id="CHEBI:29105"/>
        <note>structural</note>
    </ligand>
</feature>
<feature type="binding site" evidence="1">
    <location>
        <position position="119"/>
    </location>
    <ligand>
        <name>Cu cation</name>
        <dbReference type="ChEBI" id="CHEBI:23378"/>
        <note>catalytic</note>
    </ligand>
</feature>
<feature type="modified residue" description="N-acetylalanine" evidence="3">
    <location>
        <position position="2"/>
    </location>
</feature>
<feature type="modified residue" description="N6-succinyllysine" evidence="5">
    <location>
        <position position="4"/>
    </location>
</feature>
<feature type="modified residue" description="N6-succinyllysine" evidence="5">
    <location>
        <position position="10"/>
    </location>
</feature>
<feature type="modified residue" description="N6-succinyllysine" evidence="5">
    <location>
        <position position="90"/>
    </location>
</feature>
<feature type="modified residue" description="Phosphoserine" evidence="2">
    <location>
        <position position="101"/>
    </location>
</feature>
<feature type="modified residue" description="Phosphoserine" evidence="4">
    <location>
        <position position="104"/>
    </location>
</feature>
<feature type="modified residue" description="Phosphoserine" evidence="5">
    <location>
        <position position="106"/>
    </location>
</feature>
<feature type="modified residue" description="N6-acetyllysine; alternate" evidence="2">
    <location>
        <position position="121"/>
    </location>
</feature>
<feature type="modified residue" description="N6-succinyllysine; alternate" evidence="2">
    <location>
        <position position="121"/>
    </location>
</feature>
<feature type="modified residue" description="N6-acetyllysine; alternate" evidence="5">
    <location>
        <position position="135"/>
    </location>
</feature>
<feature type="modified residue" description="N6-succinyllysine; alternate" evidence="5">
    <location>
        <position position="135"/>
    </location>
</feature>
<feature type="lipid moiety-binding region" description="S-palmitoyl cysteine" evidence="1">
    <location>
        <position position="7"/>
    </location>
</feature>
<feature type="disulfide bond" evidence="1">
    <location>
        <begin position="56"/>
        <end position="145"/>
    </location>
</feature>
<feature type="sequence variant" description="In European red deer.">
    <original>L</original>
    <variation>M</variation>
    <location>
        <position position="9"/>
    </location>
</feature>
<feature type="sequence variant" description="In European red deer.">
    <original>H</original>
    <variation>N</variation>
    <location>
        <position position="26"/>
    </location>
</feature>
<reference key="1">
    <citation type="journal article" date="1997" name="Anim. Genet.">
        <title>Characterization of the erythrocyte superoxide dismutase allozymes in the deer Cervus elaphus.</title>
        <authorList>
            <person name="He K."/>
            <person name="Wilton S.D."/>
            <person name="Tate M.L."/>
            <person name="Murphy M.P."/>
        </authorList>
    </citation>
    <scope>NUCLEOTIDE SEQUENCE [MRNA]</scope>
</reference>
<keyword id="KW-0007">Acetylation</keyword>
<keyword id="KW-0049">Antioxidant</keyword>
<keyword id="KW-0186">Copper</keyword>
<keyword id="KW-0963">Cytoplasm</keyword>
<keyword id="KW-1015">Disulfide bond</keyword>
<keyword id="KW-0449">Lipoprotein</keyword>
<keyword id="KW-0479">Metal-binding</keyword>
<keyword id="KW-0539">Nucleus</keyword>
<keyword id="KW-0560">Oxidoreductase</keyword>
<keyword id="KW-0564">Palmitate</keyword>
<keyword id="KW-0597">Phosphoprotein</keyword>
<keyword id="KW-0862">Zinc</keyword>
<organism>
    <name type="scientific">Cervus elaphus</name>
    <name type="common">Red deer</name>
    <dbReference type="NCBI Taxonomy" id="9860"/>
    <lineage>
        <taxon>Eukaryota</taxon>
        <taxon>Metazoa</taxon>
        <taxon>Chordata</taxon>
        <taxon>Craniata</taxon>
        <taxon>Vertebrata</taxon>
        <taxon>Euteleostomi</taxon>
        <taxon>Mammalia</taxon>
        <taxon>Eutheria</taxon>
        <taxon>Laurasiatheria</taxon>
        <taxon>Artiodactyla</taxon>
        <taxon>Ruminantia</taxon>
        <taxon>Pecora</taxon>
        <taxon>Cervidae</taxon>
        <taxon>Cervinae</taxon>
        <taxon>Cervus</taxon>
    </lineage>
</organism>
<accession>O46412</accession>
<accession>O46413</accession>
<sequence>MATKAVCVLKGDGPVQGTIRFEAKGHTVVVTGSITGLTEGDHGFHVHQFGDNTQGCTSAGPHFNPLSKKHGGPKDEERHVGDLGNVTADKNGVAKVDIVDSLISLSGEHSIIGRTMVVHEKPDDLGRGGNEESTKTGNARNRLACGVIGIAQ</sequence>
<proteinExistence type="evidence at transcript level"/>